<organism>
    <name type="scientific">Rickettsia rickettsii (strain Sheila Smith)</name>
    <dbReference type="NCBI Taxonomy" id="392021"/>
    <lineage>
        <taxon>Bacteria</taxon>
        <taxon>Pseudomonadati</taxon>
        <taxon>Pseudomonadota</taxon>
        <taxon>Alphaproteobacteria</taxon>
        <taxon>Rickettsiales</taxon>
        <taxon>Rickettsiaceae</taxon>
        <taxon>Rickettsieae</taxon>
        <taxon>Rickettsia</taxon>
        <taxon>spotted fever group</taxon>
    </lineage>
</organism>
<reference key="1">
    <citation type="submission" date="2007-09" db="EMBL/GenBank/DDBJ databases">
        <title>Complete genome sequence of Rickettsia rickettsii.</title>
        <authorList>
            <person name="Madan A."/>
            <person name="Fahey J."/>
            <person name="Helton E."/>
            <person name="Ketteman M."/>
            <person name="Madan A."/>
            <person name="Rodrigues S."/>
            <person name="Sanchez A."/>
            <person name="Dasch G."/>
            <person name="Eremeeva M."/>
        </authorList>
    </citation>
    <scope>NUCLEOTIDE SEQUENCE [LARGE SCALE GENOMIC DNA]</scope>
    <source>
        <strain>Sheila Smith</strain>
    </source>
</reference>
<comment type="function">
    <text evidence="1">Catalyzes the reversible transfer of the terminal phosphate group between ATP and AMP. Plays an important role in cellular energy homeostasis and in adenine nucleotide metabolism.</text>
</comment>
<comment type="catalytic activity">
    <reaction evidence="1">
        <text>AMP + ATP = 2 ADP</text>
        <dbReference type="Rhea" id="RHEA:12973"/>
        <dbReference type="ChEBI" id="CHEBI:30616"/>
        <dbReference type="ChEBI" id="CHEBI:456215"/>
        <dbReference type="ChEBI" id="CHEBI:456216"/>
        <dbReference type="EC" id="2.7.4.3"/>
    </reaction>
</comment>
<comment type="pathway">
    <text evidence="1">Purine metabolism; AMP biosynthesis via salvage pathway; AMP from ADP: step 1/1.</text>
</comment>
<comment type="subunit">
    <text evidence="1">Monomer.</text>
</comment>
<comment type="subcellular location">
    <subcellularLocation>
        <location evidence="1">Cytoplasm</location>
    </subcellularLocation>
</comment>
<comment type="domain">
    <text evidence="1">Consists of three domains, a large central CORE domain and two small peripheral domains, NMPbind and LID, which undergo movements during catalysis. The LID domain closes over the site of phosphoryl transfer upon ATP binding. Assembling and dissambling the active center during each catalytic cycle provides an effective means to prevent ATP hydrolysis. Some bacteria have evolved a zinc-coordinating structure that stabilizes the LID domain.</text>
</comment>
<comment type="similarity">
    <text evidence="1">Belongs to the adenylate kinase family.</text>
</comment>
<sequence>MIVIFLGPPGAGKGTQGKKIAKKIDLPHIAIGDIFRTIIKTSTSEAELINNYVRQGELIPNEIVNQVIKNFLLSFEYKNGYILDGYPRNLEQAQFFESFIKEKIKIIYFDVSGELLIKRILGRYSCKNCGKIYNRYFLQPKTDNVCDVCGSSTFDYRKDDNEEVIKKRIEVYKTETYPLIDYYKNSGNFYIVNGSKNEQEIAMDIQKILKIN</sequence>
<accession>A8GT48</accession>
<keyword id="KW-0067">ATP-binding</keyword>
<keyword id="KW-0963">Cytoplasm</keyword>
<keyword id="KW-0418">Kinase</keyword>
<keyword id="KW-0479">Metal-binding</keyword>
<keyword id="KW-0545">Nucleotide biosynthesis</keyword>
<keyword id="KW-0547">Nucleotide-binding</keyword>
<keyword id="KW-0808">Transferase</keyword>
<keyword id="KW-0862">Zinc</keyword>
<proteinExistence type="inferred from homology"/>
<name>KAD_RICRS</name>
<protein>
    <recommendedName>
        <fullName evidence="1">Adenylate kinase</fullName>
        <shortName evidence="1">AK</shortName>
        <ecNumber evidence="1">2.7.4.3</ecNumber>
    </recommendedName>
    <alternativeName>
        <fullName evidence="1">ATP-AMP transphosphorylase</fullName>
    </alternativeName>
    <alternativeName>
        <fullName evidence="1">ATP:AMP phosphotransferase</fullName>
    </alternativeName>
    <alternativeName>
        <fullName evidence="1">Adenylate monophosphate kinase</fullName>
    </alternativeName>
</protein>
<feature type="chain" id="PRO_1000021767" description="Adenylate kinase">
    <location>
        <begin position="1"/>
        <end position="212"/>
    </location>
</feature>
<feature type="region of interest" description="NMP" evidence="1">
    <location>
        <begin position="30"/>
        <end position="59"/>
    </location>
</feature>
<feature type="region of interest" description="LID" evidence="1">
    <location>
        <begin position="122"/>
        <end position="160"/>
    </location>
</feature>
<feature type="binding site" evidence="1">
    <location>
        <begin position="10"/>
        <end position="15"/>
    </location>
    <ligand>
        <name>ATP</name>
        <dbReference type="ChEBI" id="CHEBI:30616"/>
    </ligand>
</feature>
<feature type="binding site" evidence="1">
    <location>
        <position position="36"/>
    </location>
    <ligand>
        <name>AMP</name>
        <dbReference type="ChEBI" id="CHEBI:456215"/>
    </ligand>
</feature>
<feature type="binding site" evidence="1">
    <location>
        <begin position="57"/>
        <end position="59"/>
    </location>
    <ligand>
        <name>AMP</name>
        <dbReference type="ChEBI" id="CHEBI:456215"/>
    </ligand>
</feature>
<feature type="binding site" evidence="1">
    <location>
        <begin position="85"/>
        <end position="88"/>
    </location>
    <ligand>
        <name>AMP</name>
        <dbReference type="ChEBI" id="CHEBI:456215"/>
    </ligand>
</feature>
<feature type="binding site" evidence="1">
    <location>
        <position position="92"/>
    </location>
    <ligand>
        <name>AMP</name>
        <dbReference type="ChEBI" id="CHEBI:456215"/>
    </ligand>
</feature>
<feature type="binding site" evidence="1">
    <location>
        <position position="123"/>
    </location>
    <ligand>
        <name>ATP</name>
        <dbReference type="ChEBI" id="CHEBI:30616"/>
    </ligand>
</feature>
<feature type="binding site" evidence="1">
    <location>
        <position position="126"/>
    </location>
    <ligand>
        <name>Zn(2+)</name>
        <dbReference type="ChEBI" id="CHEBI:29105"/>
        <note>structural</note>
    </ligand>
</feature>
<feature type="binding site" evidence="1">
    <location>
        <position position="129"/>
    </location>
    <ligand>
        <name>Zn(2+)</name>
        <dbReference type="ChEBI" id="CHEBI:29105"/>
        <note>structural</note>
    </ligand>
</feature>
<feature type="binding site" evidence="1">
    <location>
        <begin position="132"/>
        <end position="133"/>
    </location>
    <ligand>
        <name>ATP</name>
        <dbReference type="ChEBI" id="CHEBI:30616"/>
    </ligand>
</feature>
<feature type="binding site" evidence="1">
    <location>
        <position position="146"/>
    </location>
    <ligand>
        <name>Zn(2+)</name>
        <dbReference type="ChEBI" id="CHEBI:29105"/>
        <note>structural</note>
    </ligand>
</feature>
<feature type="binding site" evidence="1">
    <location>
        <position position="149"/>
    </location>
    <ligand>
        <name>Zn(2+)</name>
        <dbReference type="ChEBI" id="CHEBI:29105"/>
        <note>structural</note>
    </ligand>
</feature>
<feature type="binding site" evidence="1">
    <location>
        <position position="157"/>
    </location>
    <ligand>
        <name>AMP</name>
        <dbReference type="ChEBI" id="CHEBI:456215"/>
    </ligand>
</feature>
<feature type="binding site" evidence="1">
    <location>
        <position position="168"/>
    </location>
    <ligand>
        <name>AMP</name>
        <dbReference type="ChEBI" id="CHEBI:456215"/>
    </ligand>
</feature>
<feature type="binding site" evidence="1">
    <location>
        <position position="196"/>
    </location>
    <ligand>
        <name>ATP</name>
        <dbReference type="ChEBI" id="CHEBI:30616"/>
    </ligand>
</feature>
<gene>
    <name evidence="1" type="primary">adk</name>
    <name type="ordered locus">A1G_05450</name>
</gene>
<evidence type="ECO:0000255" key="1">
    <source>
        <dbReference type="HAMAP-Rule" id="MF_00235"/>
    </source>
</evidence>
<dbReference type="EC" id="2.7.4.3" evidence="1"/>
<dbReference type="EMBL" id="CP000848">
    <property type="protein sequence ID" value="ABV76573.1"/>
    <property type="molecule type" value="Genomic_DNA"/>
</dbReference>
<dbReference type="RefSeq" id="WP_012151136.1">
    <property type="nucleotide sequence ID" value="NZ_CP121767.1"/>
</dbReference>
<dbReference type="SMR" id="A8GT48"/>
<dbReference type="GeneID" id="79937649"/>
<dbReference type="KEGG" id="rri:A1G_05450"/>
<dbReference type="HOGENOM" id="CLU_032354_1_2_5"/>
<dbReference type="UniPathway" id="UPA00588">
    <property type="reaction ID" value="UER00649"/>
</dbReference>
<dbReference type="Proteomes" id="UP000006832">
    <property type="component" value="Chromosome"/>
</dbReference>
<dbReference type="GO" id="GO:0005737">
    <property type="term" value="C:cytoplasm"/>
    <property type="evidence" value="ECO:0007669"/>
    <property type="project" value="UniProtKB-SubCell"/>
</dbReference>
<dbReference type="GO" id="GO:0004017">
    <property type="term" value="F:adenylate kinase activity"/>
    <property type="evidence" value="ECO:0007669"/>
    <property type="project" value="UniProtKB-UniRule"/>
</dbReference>
<dbReference type="GO" id="GO:0005524">
    <property type="term" value="F:ATP binding"/>
    <property type="evidence" value="ECO:0007669"/>
    <property type="project" value="UniProtKB-UniRule"/>
</dbReference>
<dbReference type="GO" id="GO:0008270">
    <property type="term" value="F:zinc ion binding"/>
    <property type="evidence" value="ECO:0007669"/>
    <property type="project" value="UniProtKB-UniRule"/>
</dbReference>
<dbReference type="GO" id="GO:0044209">
    <property type="term" value="P:AMP salvage"/>
    <property type="evidence" value="ECO:0007669"/>
    <property type="project" value="UniProtKB-UniRule"/>
</dbReference>
<dbReference type="CDD" id="cd01428">
    <property type="entry name" value="ADK"/>
    <property type="match status" value="1"/>
</dbReference>
<dbReference type="Gene3D" id="3.40.50.300">
    <property type="entry name" value="P-loop containing nucleotide triphosphate hydrolases"/>
    <property type="match status" value="1"/>
</dbReference>
<dbReference type="HAMAP" id="MF_00235">
    <property type="entry name" value="Adenylate_kinase_Adk"/>
    <property type="match status" value="1"/>
</dbReference>
<dbReference type="InterPro" id="IPR006259">
    <property type="entry name" value="Adenyl_kin_sub"/>
</dbReference>
<dbReference type="InterPro" id="IPR000850">
    <property type="entry name" value="Adenylat/UMP-CMP_kin"/>
</dbReference>
<dbReference type="InterPro" id="IPR033690">
    <property type="entry name" value="Adenylat_kinase_CS"/>
</dbReference>
<dbReference type="InterPro" id="IPR007862">
    <property type="entry name" value="Adenylate_kinase_lid-dom"/>
</dbReference>
<dbReference type="InterPro" id="IPR036193">
    <property type="entry name" value="ADK_active_lid_dom_sf"/>
</dbReference>
<dbReference type="InterPro" id="IPR027417">
    <property type="entry name" value="P-loop_NTPase"/>
</dbReference>
<dbReference type="NCBIfam" id="TIGR01351">
    <property type="entry name" value="adk"/>
    <property type="match status" value="1"/>
</dbReference>
<dbReference type="NCBIfam" id="NF001383">
    <property type="entry name" value="PRK00279.2-1"/>
    <property type="match status" value="1"/>
</dbReference>
<dbReference type="PANTHER" id="PTHR23359">
    <property type="entry name" value="NUCLEOTIDE KINASE"/>
    <property type="match status" value="1"/>
</dbReference>
<dbReference type="Pfam" id="PF00406">
    <property type="entry name" value="ADK"/>
    <property type="match status" value="1"/>
</dbReference>
<dbReference type="Pfam" id="PF05191">
    <property type="entry name" value="ADK_lid"/>
    <property type="match status" value="1"/>
</dbReference>
<dbReference type="PRINTS" id="PR00094">
    <property type="entry name" value="ADENYLTKNASE"/>
</dbReference>
<dbReference type="SUPFAM" id="SSF57774">
    <property type="entry name" value="Microbial and mitochondrial ADK, insert 'zinc finger' domain"/>
    <property type="match status" value="1"/>
</dbReference>
<dbReference type="SUPFAM" id="SSF52540">
    <property type="entry name" value="P-loop containing nucleoside triphosphate hydrolases"/>
    <property type="match status" value="1"/>
</dbReference>
<dbReference type="PROSITE" id="PS00113">
    <property type="entry name" value="ADENYLATE_KINASE"/>
    <property type="match status" value="1"/>
</dbReference>